<keyword id="KW-0143">Chaperone</keyword>
<keyword id="KW-0963">Cytoplasm</keyword>
<keyword id="KW-0235">DNA replication</keyword>
<keyword id="KW-0479">Metal-binding</keyword>
<keyword id="KW-0677">Repeat</keyword>
<keyword id="KW-0346">Stress response</keyword>
<keyword id="KW-0862">Zinc</keyword>
<keyword id="KW-0863">Zinc-finger</keyword>
<gene>
    <name evidence="1" type="primary">dnaJ</name>
    <name type="ordered locus">SYNW0024</name>
</gene>
<protein>
    <recommendedName>
        <fullName evidence="1">Chaperone protein DnaJ</fullName>
    </recommendedName>
</protein>
<organism>
    <name type="scientific">Parasynechococcus marenigrum (strain WH8102)</name>
    <dbReference type="NCBI Taxonomy" id="84588"/>
    <lineage>
        <taxon>Bacteria</taxon>
        <taxon>Bacillati</taxon>
        <taxon>Cyanobacteriota</taxon>
        <taxon>Cyanophyceae</taxon>
        <taxon>Synechococcales</taxon>
        <taxon>Prochlorococcaceae</taxon>
        <taxon>Parasynechococcus</taxon>
        <taxon>Parasynechococcus marenigrum</taxon>
    </lineage>
</organism>
<proteinExistence type="inferred from homology"/>
<name>DNAJ_PARMW</name>
<dbReference type="EMBL" id="BX569689">
    <property type="protein sequence ID" value="CAE06539.1"/>
    <property type="molecule type" value="Genomic_DNA"/>
</dbReference>
<dbReference type="RefSeq" id="WP_011126902.1">
    <property type="nucleotide sequence ID" value="NC_005070.1"/>
</dbReference>
<dbReference type="SMR" id="Q7UA76"/>
<dbReference type="STRING" id="84588.SYNW0024"/>
<dbReference type="KEGG" id="syw:SYNW0024"/>
<dbReference type="eggNOG" id="COG0484">
    <property type="taxonomic scope" value="Bacteria"/>
</dbReference>
<dbReference type="HOGENOM" id="CLU_017633_0_1_3"/>
<dbReference type="Proteomes" id="UP000001422">
    <property type="component" value="Chromosome"/>
</dbReference>
<dbReference type="GO" id="GO:0005737">
    <property type="term" value="C:cytoplasm"/>
    <property type="evidence" value="ECO:0007669"/>
    <property type="project" value="UniProtKB-SubCell"/>
</dbReference>
<dbReference type="GO" id="GO:0005524">
    <property type="term" value="F:ATP binding"/>
    <property type="evidence" value="ECO:0007669"/>
    <property type="project" value="InterPro"/>
</dbReference>
<dbReference type="GO" id="GO:0031072">
    <property type="term" value="F:heat shock protein binding"/>
    <property type="evidence" value="ECO:0007669"/>
    <property type="project" value="InterPro"/>
</dbReference>
<dbReference type="GO" id="GO:0051082">
    <property type="term" value="F:unfolded protein binding"/>
    <property type="evidence" value="ECO:0007669"/>
    <property type="project" value="UniProtKB-UniRule"/>
</dbReference>
<dbReference type="GO" id="GO:0008270">
    <property type="term" value="F:zinc ion binding"/>
    <property type="evidence" value="ECO:0007669"/>
    <property type="project" value="UniProtKB-UniRule"/>
</dbReference>
<dbReference type="GO" id="GO:0051085">
    <property type="term" value="P:chaperone cofactor-dependent protein refolding"/>
    <property type="evidence" value="ECO:0007669"/>
    <property type="project" value="TreeGrafter"/>
</dbReference>
<dbReference type="GO" id="GO:0006260">
    <property type="term" value="P:DNA replication"/>
    <property type="evidence" value="ECO:0007669"/>
    <property type="project" value="UniProtKB-KW"/>
</dbReference>
<dbReference type="GO" id="GO:0042026">
    <property type="term" value="P:protein refolding"/>
    <property type="evidence" value="ECO:0007669"/>
    <property type="project" value="TreeGrafter"/>
</dbReference>
<dbReference type="GO" id="GO:0009408">
    <property type="term" value="P:response to heat"/>
    <property type="evidence" value="ECO:0007669"/>
    <property type="project" value="InterPro"/>
</dbReference>
<dbReference type="CDD" id="cd06257">
    <property type="entry name" value="DnaJ"/>
    <property type="match status" value="1"/>
</dbReference>
<dbReference type="CDD" id="cd10747">
    <property type="entry name" value="DnaJ_C"/>
    <property type="match status" value="1"/>
</dbReference>
<dbReference type="CDD" id="cd10719">
    <property type="entry name" value="DnaJ_zf"/>
    <property type="match status" value="1"/>
</dbReference>
<dbReference type="FunFam" id="2.60.260.20:FF:000005">
    <property type="entry name" value="Chaperone protein dnaJ 1, mitochondrial"/>
    <property type="match status" value="1"/>
</dbReference>
<dbReference type="FunFam" id="2.10.230.10:FF:000002">
    <property type="entry name" value="Molecular chaperone DnaJ"/>
    <property type="match status" value="1"/>
</dbReference>
<dbReference type="Gene3D" id="1.10.287.110">
    <property type="entry name" value="DnaJ domain"/>
    <property type="match status" value="1"/>
</dbReference>
<dbReference type="Gene3D" id="2.10.230.10">
    <property type="entry name" value="Heat shock protein DnaJ, cysteine-rich domain"/>
    <property type="match status" value="1"/>
</dbReference>
<dbReference type="Gene3D" id="2.60.260.20">
    <property type="entry name" value="Urease metallochaperone UreE, N-terminal domain"/>
    <property type="match status" value="2"/>
</dbReference>
<dbReference type="HAMAP" id="MF_01152">
    <property type="entry name" value="DnaJ"/>
    <property type="match status" value="1"/>
</dbReference>
<dbReference type="InterPro" id="IPR012724">
    <property type="entry name" value="DnaJ"/>
</dbReference>
<dbReference type="InterPro" id="IPR002939">
    <property type="entry name" value="DnaJ_C"/>
</dbReference>
<dbReference type="InterPro" id="IPR001623">
    <property type="entry name" value="DnaJ_domain"/>
</dbReference>
<dbReference type="InterPro" id="IPR018253">
    <property type="entry name" value="DnaJ_domain_CS"/>
</dbReference>
<dbReference type="InterPro" id="IPR008971">
    <property type="entry name" value="HSP40/DnaJ_pept-bd"/>
</dbReference>
<dbReference type="InterPro" id="IPR001305">
    <property type="entry name" value="HSP_DnaJ_Cys-rich_dom"/>
</dbReference>
<dbReference type="InterPro" id="IPR036410">
    <property type="entry name" value="HSP_DnaJ_Cys-rich_dom_sf"/>
</dbReference>
<dbReference type="InterPro" id="IPR036869">
    <property type="entry name" value="J_dom_sf"/>
</dbReference>
<dbReference type="NCBIfam" id="TIGR02349">
    <property type="entry name" value="DnaJ_bact"/>
    <property type="match status" value="1"/>
</dbReference>
<dbReference type="NCBIfam" id="NF008035">
    <property type="entry name" value="PRK10767.1"/>
    <property type="match status" value="1"/>
</dbReference>
<dbReference type="NCBIfam" id="NF010886">
    <property type="entry name" value="PRK14293.1"/>
    <property type="match status" value="1"/>
</dbReference>
<dbReference type="PANTHER" id="PTHR43096:SF10">
    <property type="entry name" value="CHAPERONE PROTEIN DNAJ A6, CHLOROPLASTIC"/>
    <property type="match status" value="1"/>
</dbReference>
<dbReference type="PANTHER" id="PTHR43096">
    <property type="entry name" value="DNAJ HOMOLOG 1, MITOCHONDRIAL-RELATED"/>
    <property type="match status" value="1"/>
</dbReference>
<dbReference type="Pfam" id="PF00226">
    <property type="entry name" value="DnaJ"/>
    <property type="match status" value="1"/>
</dbReference>
<dbReference type="Pfam" id="PF01556">
    <property type="entry name" value="DnaJ_C"/>
    <property type="match status" value="1"/>
</dbReference>
<dbReference type="Pfam" id="PF00684">
    <property type="entry name" value="DnaJ_CXXCXGXG"/>
    <property type="match status" value="1"/>
</dbReference>
<dbReference type="PRINTS" id="PR00625">
    <property type="entry name" value="JDOMAIN"/>
</dbReference>
<dbReference type="SMART" id="SM00271">
    <property type="entry name" value="DnaJ"/>
    <property type="match status" value="1"/>
</dbReference>
<dbReference type="SUPFAM" id="SSF46565">
    <property type="entry name" value="Chaperone J-domain"/>
    <property type="match status" value="1"/>
</dbReference>
<dbReference type="SUPFAM" id="SSF57938">
    <property type="entry name" value="DnaJ/Hsp40 cysteine-rich domain"/>
    <property type="match status" value="1"/>
</dbReference>
<dbReference type="SUPFAM" id="SSF49493">
    <property type="entry name" value="HSP40/DnaJ peptide-binding domain"/>
    <property type="match status" value="2"/>
</dbReference>
<dbReference type="PROSITE" id="PS00636">
    <property type="entry name" value="DNAJ_1"/>
    <property type="match status" value="1"/>
</dbReference>
<dbReference type="PROSITE" id="PS50076">
    <property type="entry name" value="DNAJ_2"/>
    <property type="match status" value="1"/>
</dbReference>
<dbReference type="PROSITE" id="PS51188">
    <property type="entry name" value="ZF_CR"/>
    <property type="match status" value="1"/>
</dbReference>
<reference key="1">
    <citation type="journal article" date="2003" name="Nature">
        <title>The genome of a motile marine Synechococcus.</title>
        <authorList>
            <person name="Palenik B."/>
            <person name="Brahamsha B."/>
            <person name="Larimer F.W."/>
            <person name="Land M.L."/>
            <person name="Hauser L."/>
            <person name="Chain P."/>
            <person name="Lamerdin J.E."/>
            <person name="Regala W."/>
            <person name="Allen E.E."/>
            <person name="McCarren J."/>
            <person name="Paulsen I.T."/>
            <person name="Dufresne A."/>
            <person name="Partensky F."/>
            <person name="Webb E.A."/>
            <person name="Waterbury J."/>
        </authorList>
    </citation>
    <scope>NUCLEOTIDE SEQUENCE [LARGE SCALE GENOMIC DNA]</scope>
    <source>
        <strain>WH8102</strain>
    </source>
</reference>
<evidence type="ECO:0000255" key="1">
    <source>
        <dbReference type="HAMAP-Rule" id="MF_01152"/>
    </source>
</evidence>
<feature type="chain" id="PRO_0000070914" description="Chaperone protein DnaJ">
    <location>
        <begin position="1"/>
        <end position="377"/>
    </location>
</feature>
<feature type="domain" description="J" evidence="1">
    <location>
        <begin position="3"/>
        <end position="67"/>
    </location>
</feature>
<feature type="repeat" description="CXXCXGXG motif">
    <location>
        <begin position="146"/>
        <end position="153"/>
    </location>
</feature>
<feature type="repeat" description="CXXCXGXG motif">
    <location>
        <begin position="163"/>
        <end position="170"/>
    </location>
</feature>
<feature type="repeat" description="CXXCXGXG motif">
    <location>
        <begin position="189"/>
        <end position="196"/>
    </location>
</feature>
<feature type="repeat" description="CXXCXGXG motif">
    <location>
        <begin position="203"/>
        <end position="210"/>
    </location>
</feature>
<feature type="zinc finger region" description="CR-type" evidence="1">
    <location>
        <begin position="133"/>
        <end position="215"/>
    </location>
</feature>
<feature type="binding site" evidence="1">
    <location>
        <position position="146"/>
    </location>
    <ligand>
        <name>Zn(2+)</name>
        <dbReference type="ChEBI" id="CHEBI:29105"/>
        <label>1</label>
    </ligand>
</feature>
<feature type="binding site" evidence="1">
    <location>
        <position position="149"/>
    </location>
    <ligand>
        <name>Zn(2+)</name>
        <dbReference type="ChEBI" id="CHEBI:29105"/>
        <label>1</label>
    </ligand>
</feature>
<feature type="binding site" evidence="1">
    <location>
        <position position="163"/>
    </location>
    <ligand>
        <name>Zn(2+)</name>
        <dbReference type="ChEBI" id="CHEBI:29105"/>
        <label>2</label>
    </ligand>
</feature>
<feature type="binding site" evidence="1">
    <location>
        <position position="166"/>
    </location>
    <ligand>
        <name>Zn(2+)</name>
        <dbReference type="ChEBI" id="CHEBI:29105"/>
        <label>2</label>
    </ligand>
</feature>
<feature type="binding site" evidence="1">
    <location>
        <position position="189"/>
    </location>
    <ligand>
        <name>Zn(2+)</name>
        <dbReference type="ChEBI" id="CHEBI:29105"/>
        <label>2</label>
    </ligand>
</feature>
<feature type="binding site" evidence="1">
    <location>
        <position position="192"/>
    </location>
    <ligand>
        <name>Zn(2+)</name>
        <dbReference type="ChEBI" id="CHEBI:29105"/>
        <label>2</label>
    </ligand>
</feature>
<feature type="binding site" evidence="1">
    <location>
        <position position="203"/>
    </location>
    <ligand>
        <name>Zn(2+)</name>
        <dbReference type="ChEBI" id="CHEBI:29105"/>
        <label>1</label>
    </ligand>
</feature>
<feature type="binding site" evidence="1">
    <location>
        <position position="206"/>
    </location>
    <ligand>
        <name>Zn(2+)</name>
        <dbReference type="ChEBI" id="CHEBI:29105"/>
        <label>1</label>
    </ligand>
</feature>
<sequence>MADYYDLLGVGRDADADTLKRAYRSKARKYHPDINKEPGAEDRFKEIGRAYEVLSDPQTRARYDQFGEAGLGGAAGASDMGDMGGFADLFETFFQGFGGPGGAAAGRSGRRGPQQGDDLRYDLTIDFEQAVFGQEQEIKIPHLETCDTCGGSGAKAGSGPTTCGTCGGAGQVRRATRTPFGSFTQVAECPNCGGTGQVIADPCNACGGQGVRQVRKKLRINIPAGVDTGTRLRVSGEGNAGQRGGPSGDLYVFLTVKSHPRLRRDGLNILSTVNVSYLQAILGDTIEVETVDGDTVLEIPPGTQPGTVLTLANKGIPKLGNPVARGDQRVQVMVQLPTRLSDPERTLLEELAGHHSARGKQHHHHNSGLFARLFGQK</sequence>
<accession>Q7UA76</accession>
<comment type="function">
    <text evidence="1">Participates actively in the response to hyperosmotic and heat shock by preventing the aggregation of stress-denatured proteins and by disaggregating proteins, also in an autonomous, DnaK-independent fashion. Unfolded proteins bind initially to DnaJ; upon interaction with the DnaJ-bound protein, DnaK hydrolyzes its bound ATP, resulting in the formation of a stable complex. GrpE releases ADP from DnaK; ATP binding to DnaK triggers the release of the substrate protein, thus completing the reaction cycle. Several rounds of ATP-dependent interactions between DnaJ, DnaK and GrpE are required for fully efficient folding. Also involved, together with DnaK and GrpE, in the DNA replication of plasmids through activation of initiation proteins.</text>
</comment>
<comment type="cofactor">
    <cofactor evidence="1">
        <name>Zn(2+)</name>
        <dbReference type="ChEBI" id="CHEBI:29105"/>
    </cofactor>
    <text evidence="1">Binds 2 Zn(2+) ions per monomer.</text>
</comment>
<comment type="subunit">
    <text evidence="1">Homodimer.</text>
</comment>
<comment type="subcellular location">
    <subcellularLocation>
        <location evidence="1">Cytoplasm</location>
    </subcellularLocation>
</comment>
<comment type="domain">
    <text evidence="1">The J domain is necessary and sufficient to stimulate DnaK ATPase activity. Zinc center 1 plays an important role in the autonomous, DnaK-independent chaperone activity of DnaJ. Zinc center 2 is essential for interaction with DnaK and for DnaJ activity.</text>
</comment>
<comment type="similarity">
    <text evidence="1">Belongs to the DnaJ family.</text>
</comment>